<sequence>MTLQIQFKKYELPPLPYKIDALEPYISKDIIDVHYNGHHKGYVNGANSLLERLEKVVKGDLQTGQYDIQGIIRGLTFNINGHKLHALYWENMAPSGKGGGKPGGALADLINKQYGSFDRFKQVFTETANSLPGTGWAVLYYDTESGNLQIMTFENHFQNHIAEIPIILILDEFEHAYYLQYKNKRADYVNAWWNVVNWDAAEKKLQKYLTK</sequence>
<gene>
    <name type="primary">sod</name>
    <name type="ordered locus">SSO0316</name>
</gene>
<name>SODF_SACS2</name>
<reference key="1">
    <citation type="journal article" date="1999" name="J. Biochem.">
        <title>An azide-insensitive superoxide dismutase from a hyperthermophilic archaeon, Sulfolobus solfataricus.</title>
        <authorList>
            <person name="Yamano S."/>
            <person name="Maruyama T."/>
        </authorList>
    </citation>
    <scope>NUCLEOTIDE SEQUENCE [GENOMIC DNA]</scope>
</reference>
<reference key="2">
    <citation type="journal article" date="2001" name="Eur. J. Biochem.">
        <title>Phenylmethanesulfonyl fluoride inactivates an archaeal superoxide dismutase by chemical modification of a specific tyrosine residue: cloning, sequencing and expression of the gene coding for Sulfolobus solfataricus superoxide dismutase.</title>
        <authorList>
            <person name="De Vendittis E."/>
            <person name="Ursby T."/>
            <person name="Rullo R."/>
            <person name="Gogliettino M.A."/>
            <person name="Masullo M."/>
            <person name="Bocchini V."/>
        </authorList>
    </citation>
    <scope>NUCLEOTIDE SEQUENCE [GENOMIC DNA]</scope>
    <source>
        <strain>DSM 5833 / MT-4</strain>
    </source>
</reference>
<reference key="3">
    <citation type="journal article" date="2001" name="Proc. Natl. Acad. Sci. U.S.A.">
        <title>The complete genome of the crenarchaeon Sulfolobus solfataricus P2.</title>
        <authorList>
            <person name="She Q."/>
            <person name="Singh R.K."/>
            <person name="Confalonieri F."/>
            <person name="Zivanovic Y."/>
            <person name="Allard G."/>
            <person name="Awayez M.J."/>
            <person name="Chan-Weiher C.C.-Y."/>
            <person name="Clausen I.G."/>
            <person name="Curtis B.A."/>
            <person name="De Moors A."/>
            <person name="Erauso G."/>
            <person name="Fletcher C."/>
            <person name="Gordon P.M.K."/>
            <person name="Heikamp-de Jong I."/>
            <person name="Jeffries A.C."/>
            <person name="Kozera C.J."/>
            <person name="Medina N."/>
            <person name="Peng X."/>
            <person name="Thi-Ngoc H.P."/>
            <person name="Redder P."/>
            <person name="Schenk M.E."/>
            <person name="Theriault C."/>
            <person name="Tolstrup N."/>
            <person name="Charlebois R.L."/>
            <person name="Doolittle W.F."/>
            <person name="Duguet M."/>
            <person name="Gaasterland T."/>
            <person name="Garrett R.A."/>
            <person name="Ragan M.A."/>
            <person name="Sensen C.W."/>
            <person name="Van der Oost J."/>
        </authorList>
    </citation>
    <scope>NUCLEOTIDE SEQUENCE [LARGE SCALE GENOMIC DNA]</scope>
    <source>
        <strain>ATCC 35092 / DSM 1617 / JCM 11322 / P2</strain>
    </source>
</reference>
<reference key="4">
    <citation type="journal article" date="1997" name="Biochim. Biophys. Acta">
        <title>Iron superoxide dismutase from the archaeon Sulfolobus solfataricus: average hydrophobicity and amino acid weight are involved in the adaptation of proteins to extreme environments.</title>
        <authorList>
            <person name="Dello Russo A."/>
            <person name="Rullo R."/>
            <person name="Nitti G."/>
            <person name="Masullo M."/>
            <person name="Bocchini V."/>
        </authorList>
    </citation>
    <scope>PROTEIN SEQUENCE OF 2-211</scope>
    <source>
        <strain>DSM 5833 / MT-4</strain>
    </source>
</reference>
<reference key="5">
    <citation type="journal article" date="1999" name="J. Mol. Biol.">
        <title>Iron superoxide dismutase from the archaeon Sulfolobus solfataricus: analysis of structure and thermostability.</title>
        <authorList>
            <person name="Ursby T."/>
            <person name="Adinolfi B.S."/>
            <person name="Al-Karadaghi S."/>
            <person name="de Vendittis E."/>
            <person name="Bocchini V."/>
        </authorList>
    </citation>
    <scope>X-RAY CRYSTALLOGRAPHY (2.3 ANGSTROMS) IN COMPLEX WITH IRON IONS</scope>
    <scope>SUBUNIT</scope>
</reference>
<evidence type="ECO:0000269" key="1">
    <source>
    </source>
</evidence>
<evidence type="ECO:0000269" key="2">
    <source>
    </source>
</evidence>
<evidence type="ECO:0000305" key="3"/>
<evidence type="ECO:0007829" key="4">
    <source>
        <dbReference type="PDB" id="1WB7"/>
    </source>
</evidence>
<evidence type="ECO:0007829" key="5">
    <source>
        <dbReference type="PDB" id="1WB8"/>
    </source>
</evidence>
<dbReference type="EC" id="1.15.1.1"/>
<dbReference type="EMBL" id="AB012620">
    <property type="protein sequence ID" value="BAA75509.1"/>
    <property type="molecule type" value="Genomic_DNA"/>
</dbReference>
<dbReference type="EMBL" id="Y15326">
    <property type="protein sequence ID" value="CAA75583.1"/>
    <property type="molecule type" value="Genomic_DNA"/>
</dbReference>
<dbReference type="EMBL" id="AE006641">
    <property type="protein sequence ID" value="AAK40652.1"/>
    <property type="molecule type" value="Genomic_DNA"/>
</dbReference>
<dbReference type="PIR" id="E90174">
    <property type="entry name" value="E90174"/>
</dbReference>
<dbReference type="RefSeq" id="WP_009990609.1">
    <property type="nucleotide sequence ID" value="NC_002754.1"/>
</dbReference>
<dbReference type="PDB" id="1WB7">
    <property type="method" value="X-ray"/>
    <property type="resolution" value="2.24 A"/>
    <property type="chains" value="A/B=2-211"/>
</dbReference>
<dbReference type="PDB" id="1WB8">
    <property type="method" value="X-ray"/>
    <property type="resolution" value="2.30 A"/>
    <property type="chains" value="A/B=2-211"/>
</dbReference>
<dbReference type="PDBsum" id="1WB7"/>
<dbReference type="PDBsum" id="1WB8"/>
<dbReference type="SMR" id="P80857"/>
<dbReference type="FunCoup" id="P80857">
    <property type="interactions" value="125"/>
</dbReference>
<dbReference type="STRING" id="273057.SSO0316"/>
<dbReference type="PaxDb" id="273057-SSO0316"/>
<dbReference type="EnsemblBacteria" id="AAK40652">
    <property type="protein sequence ID" value="AAK40652"/>
    <property type="gene ID" value="SSO0316"/>
</dbReference>
<dbReference type="KEGG" id="sso:SSO0316"/>
<dbReference type="PATRIC" id="fig|273057.12.peg.310"/>
<dbReference type="eggNOG" id="arCOG04147">
    <property type="taxonomic scope" value="Archaea"/>
</dbReference>
<dbReference type="HOGENOM" id="CLU_031625_2_2_2"/>
<dbReference type="InParanoid" id="P80857"/>
<dbReference type="PhylomeDB" id="P80857"/>
<dbReference type="BRENDA" id="1.15.1.1">
    <property type="organism ID" value="6163"/>
</dbReference>
<dbReference type="EvolutionaryTrace" id="P80857"/>
<dbReference type="Proteomes" id="UP000001974">
    <property type="component" value="Chromosome"/>
</dbReference>
<dbReference type="GO" id="GO:0005737">
    <property type="term" value="C:cytoplasm"/>
    <property type="evidence" value="ECO:0007669"/>
    <property type="project" value="UniProtKB-SubCell"/>
</dbReference>
<dbReference type="GO" id="GO:0046872">
    <property type="term" value="F:metal ion binding"/>
    <property type="evidence" value="ECO:0007669"/>
    <property type="project" value="UniProtKB-KW"/>
</dbReference>
<dbReference type="GO" id="GO:0004784">
    <property type="term" value="F:superoxide dismutase activity"/>
    <property type="evidence" value="ECO:0007669"/>
    <property type="project" value="UniProtKB-EC"/>
</dbReference>
<dbReference type="FunFam" id="3.55.40.20:FF:000004">
    <property type="entry name" value="Superoxide dismutase [Fe]"/>
    <property type="match status" value="1"/>
</dbReference>
<dbReference type="Gene3D" id="1.10.287.990">
    <property type="entry name" value="Fe,Mn superoxide dismutase (SOD) domain"/>
    <property type="match status" value="1"/>
</dbReference>
<dbReference type="Gene3D" id="3.55.40.20">
    <property type="entry name" value="Iron/manganese superoxide dismutase, C-terminal domain"/>
    <property type="match status" value="1"/>
</dbReference>
<dbReference type="InterPro" id="IPR050265">
    <property type="entry name" value="Fe/Mn_Superoxide_Dismutase"/>
</dbReference>
<dbReference type="InterPro" id="IPR001189">
    <property type="entry name" value="Mn/Fe_SOD"/>
</dbReference>
<dbReference type="InterPro" id="IPR019833">
    <property type="entry name" value="Mn/Fe_SOD_BS"/>
</dbReference>
<dbReference type="InterPro" id="IPR019832">
    <property type="entry name" value="Mn/Fe_SOD_C"/>
</dbReference>
<dbReference type="InterPro" id="IPR019831">
    <property type="entry name" value="Mn/Fe_SOD_N"/>
</dbReference>
<dbReference type="InterPro" id="IPR036324">
    <property type="entry name" value="Mn/Fe_SOD_N_sf"/>
</dbReference>
<dbReference type="InterPro" id="IPR036314">
    <property type="entry name" value="SOD_C_sf"/>
</dbReference>
<dbReference type="PANTHER" id="PTHR11404">
    <property type="entry name" value="SUPEROXIDE DISMUTASE 2"/>
    <property type="match status" value="1"/>
</dbReference>
<dbReference type="PANTHER" id="PTHR11404:SF6">
    <property type="entry name" value="SUPEROXIDE DISMUTASE [MN], MITOCHONDRIAL"/>
    <property type="match status" value="1"/>
</dbReference>
<dbReference type="Pfam" id="PF02777">
    <property type="entry name" value="Sod_Fe_C"/>
    <property type="match status" value="1"/>
</dbReference>
<dbReference type="Pfam" id="PF00081">
    <property type="entry name" value="Sod_Fe_N"/>
    <property type="match status" value="1"/>
</dbReference>
<dbReference type="PIRSF" id="PIRSF000349">
    <property type="entry name" value="SODismutase"/>
    <property type="match status" value="1"/>
</dbReference>
<dbReference type="PRINTS" id="PR01703">
    <property type="entry name" value="MNSODISMTASE"/>
</dbReference>
<dbReference type="SUPFAM" id="SSF54719">
    <property type="entry name" value="Fe,Mn superoxide dismutase (SOD), C-terminal domain"/>
    <property type="match status" value="1"/>
</dbReference>
<dbReference type="SUPFAM" id="SSF46609">
    <property type="entry name" value="Fe,Mn superoxide dismutase (SOD), N-terminal domain"/>
    <property type="match status" value="1"/>
</dbReference>
<dbReference type="PROSITE" id="PS00088">
    <property type="entry name" value="SOD_MN"/>
    <property type="match status" value="1"/>
</dbReference>
<protein>
    <recommendedName>
        <fullName>Superoxide dismutase [Fe]</fullName>
        <ecNumber>1.15.1.1</ecNumber>
    </recommendedName>
</protein>
<comment type="function">
    <text>Destroys superoxide anion radicals which are normally produced within the cells and which are toxic to biological systems.</text>
</comment>
<comment type="catalytic activity">
    <reaction>
        <text>2 superoxide + 2 H(+) = H2O2 + O2</text>
        <dbReference type="Rhea" id="RHEA:20696"/>
        <dbReference type="ChEBI" id="CHEBI:15378"/>
        <dbReference type="ChEBI" id="CHEBI:15379"/>
        <dbReference type="ChEBI" id="CHEBI:16240"/>
        <dbReference type="ChEBI" id="CHEBI:18421"/>
        <dbReference type="EC" id="1.15.1.1"/>
    </reaction>
</comment>
<comment type="cofactor">
    <cofactor>
        <name>Fe cation</name>
        <dbReference type="ChEBI" id="CHEBI:24875"/>
    </cofactor>
    <text>Binds 1 Fe cation per subunit.</text>
</comment>
<comment type="subunit">
    <text evidence="2">Homotetramer.</text>
</comment>
<comment type="subcellular location">
    <subcellularLocation>
        <location>Cytoplasm</location>
    </subcellularLocation>
</comment>
<comment type="similarity">
    <text evidence="3">Belongs to the iron/manganese superoxide dismutase family.</text>
</comment>
<keyword id="KW-0002">3D-structure</keyword>
<keyword id="KW-0963">Cytoplasm</keyword>
<keyword id="KW-0903">Direct protein sequencing</keyword>
<keyword id="KW-0408">Iron</keyword>
<keyword id="KW-0479">Metal-binding</keyword>
<keyword id="KW-0560">Oxidoreductase</keyword>
<keyword id="KW-1185">Reference proteome</keyword>
<feature type="initiator methionine" description="Removed" evidence="1">
    <location>
        <position position="1"/>
    </location>
</feature>
<feature type="chain" id="PRO_0000160010" description="Superoxide dismutase [Fe]">
    <location>
        <begin position="2"/>
        <end position="211"/>
    </location>
</feature>
<feature type="binding site">
    <location>
        <position position="34"/>
    </location>
    <ligand>
        <name>Fe cation</name>
        <dbReference type="ChEBI" id="CHEBI:24875"/>
    </ligand>
</feature>
<feature type="binding site">
    <location>
        <position position="85"/>
    </location>
    <ligand>
        <name>Fe cation</name>
        <dbReference type="ChEBI" id="CHEBI:24875"/>
    </ligand>
</feature>
<feature type="binding site">
    <location>
        <position position="171"/>
    </location>
    <ligand>
        <name>Fe cation</name>
        <dbReference type="ChEBI" id="CHEBI:24875"/>
    </ligand>
</feature>
<feature type="binding site">
    <location>
        <position position="175"/>
    </location>
    <ligand>
        <name>Fe cation</name>
        <dbReference type="ChEBI" id="CHEBI:24875"/>
    </ligand>
</feature>
<feature type="turn" evidence="4">
    <location>
        <begin position="19"/>
        <end position="25"/>
    </location>
</feature>
<feature type="helix" evidence="4">
    <location>
        <begin position="28"/>
        <end position="36"/>
    </location>
</feature>
<feature type="helix" evidence="4">
    <location>
        <begin position="38"/>
        <end position="57"/>
    </location>
</feature>
<feature type="strand" evidence="5">
    <location>
        <begin position="59"/>
        <end position="61"/>
    </location>
</feature>
<feature type="helix" evidence="4">
    <location>
        <begin position="68"/>
        <end position="90"/>
    </location>
</feature>
<feature type="strand" evidence="4">
    <location>
        <begin position="98"/>
        <end position="100"/>
    </location>
</feature>
<feature type="helix" evidence="4">
    <location>
        <begin position="104"/>
        <end position="114"/>
    </location>
</feature>
<feature type="helix" evidence="4">
    <location>
        <begin position="117"/>
        <end position="129"/>
    </location>
</feature>
<feature type="strand" evidence="4">
    <location>
        <begin position="133"/>
        <end position="141"/>
    </location>
</feature>
<feature type="turn" evidence="4">
    <location>
        <begin position="143"/>
        <end position="145"/>
    </location>
</feature>
<feature type="strand" evidence="4">
    <location>
        <begin position="148"/>
        <end position="154"/>
    </location>
</feature>
<feature type="turn" evidence="4">
    <location>
        <begin position="155"/>
        <end position="157"/>
    </location>
</feature>
<feature type="strand" evidence="4">
    <location>
        <begin position="166"/>
        <end position="171"/>
    </location>
</feature>
<feature type="helix" evidence="4">
    <location>
        <begin position="174"/>
        <end position="176"/>
    </location>
</feature>
<feature type="helix" evidence="4">
    <location>
        <begin position="178"/>
        <end position="181"/>
    </location>
</feature>
<feature type="helix" evidence="4">
    <location>
        <begin position="185"/>
        <end position="192"/>
    </location>
</feature>
<feature type="helix" evidence="4">
    <location>
        <begin position="193"/>
        <end position="195"/>
    </location>
</feature>
<feature type="helix" evidence="4">
    <location>
        <begin position="198"/>
        <end position="206"/>
    </location>
</feature>
<accession>P80857</accession>
<organism>
    <name type="scientific">Saccharolobus solfataricus (strain ATCC 35092 / DSM 1617 / JCM 11322 / P2)</name>
    <name type="common">Sulfolobus solfataricus</name>
    <dbReference type="NCBI Taxonomy" id="273057"/>
    <lineage>
        <taxon>Archaea</taxon>
        <taxon>Thermoproteota</taxon>
        <taxon>Thermoprotei</taxon>
        <taxon>Sulfolobales</taxon>
        <taxon>Sulfolobaceae</taxon>
        <taxon>Saccharolobus</taxon>
    </lineage>
</organism>
<proteinExistence type="evidence at protein level"/>